<evidence type="ECO:0000255" key="1">
    <source>
        <dbReference type="HAMAP-Rule" id="MF_01808"/>
    </source>
</evidence>
<evidence type="ECO:0000255" key="2">
    <source>
        <dbReference type="PROSITE-ProRule" id="PRU01246"/>
    </source>
</evidence>
<evidence type="ECO:0000255" key="3">
    <source>
        <dbReference type="PROSITE-ProRule" id="PRU01248"/>
    </source>
</evidence>
<gene>
    <name evidence="1" type="primary">xerC</name>
    <name type="ordered locus">E2348C_4111</name>
</gene>
<sequence>MTDLHTDVERYLRYLSVERQLSPITLLNYQRQLEAIINFASENGLQSWQQCDVTMVRNFAVRSRRKGLGAASLALRLSALRSFFDWLVSQNELKANPAKGVSAPKAPRHLPKNIDVDDMNRLLDIDINDPLAVRDRAMLEVMYGAGLRLSELVGLDIKHLDLESGEVWVMGKGSKERRLPIGRNAVAWIEHWLDLRNLFGSEDDALFLSKLGKRISARNVQKRFAEWGIKQGLNNHVHPHKLRHSFATHMLESSGDLRGVQELLGHANLSTTQIYTHLDFQHLASVYDAAHPRAKRGK</sequence>
<comment type="function">
    <text evidence="1">Site-specific tyrosine recombinase, which acts by catalyzing the cutting and rejoining of the recombining DNA molecules. Binds cooperatively to specific DNA consensus sequences that are separated from XerD binding sites by a short central region, forming the heterotetrameric XerC-XerD complex that recombines DNA substrates. The complex is essential to convert dimers of the bacterial chromosome into monomers to permit their segregation at cell division. It also contributes to the segregational stability of plasmids. In the complex XerC specifically exchanges the top DNA strands.</text>
</comment>
<comment type="activity regulation">
    <text evidence="1">FtsK may regulate the catalytic switch between XerC and XerD in the heterotetrameric complex during the two steps of the recombination process.</text>
</comment>
<comment type="subunit">
    <text evidence="1">Forms a cyclic heterotetrameric complex composed of two molecules of XerC and two molecules of XerD, in which XerC interacts with XerD via its C-terminal region, XerD interacts with XerC via its C-terminal region and so on.</text>
</comment>
<comment type="subcellular location">
    <subcellularLocation>
        <location evidence="1">Cytoplasm</location>
    </subcellularLocation>
</comment>
<comment type="similarity">
    <text evidence="1">Belongs to the 'phage' integrase family. XerC subfamily.</text>
</comment>
<dbReference type="EMBL" id="FM180568">
    <property type="protein sequence ID" value="CAS11659.1"/>
    <property type="molecule type" value="Genomic_DNA"/>
</dbReference>
<dbReference type="RefSeq" id="WP_000130693.1">
    <property type="nucleotide sequence ID" value="NC_011601.1"/>
</dbReference>
<dbReference type="SMR" id="B7UNC8"/>
<dbReference type="KEGG" id="ecg:E2348C_4111"/>
<dbReference type="HOGENOM" id="CLU_027562_9_0_6"/>
<dbReference type="Proteomes" id="UP000008205">
    <property type="component" value="Chromosome"/>
</dbReference>
<dbReference type="GO" id="GO:0005737">
    <property type="term" value="C:cytoplasm"/>
    <property type="evidence" value="ECO:0007669"/>
    <property type="project" value="UniProtKB-SubCell"/>
</dbReference>
<dbReference type="GO" id="GO:0003677">
    <property type="term" value="F:DNA binding"/>
    <property type="evidence" value="ECO:0007669"/>
    <property type="project" value="UniProtKB-KW"/>
</dbReference>
<dbReference type="GO" id="GO:0009037">
    <property type="term" value="F:tyrosine-based site-specific recombinase activity"/>
    <property type="evidence" value="ECO:0007669"/>
    <property type="project" value="UniProtKB-UniRule"/>
</dbReference>
<dbReference type="GO" id="GO:0051301">
    <property type="term" value="P:cell division"/>
    <property type="evidence" value="ECO:0007669"/>
    <property type="project" value="UniProtKB-KW"/>
</dbReference>
<dbReference type="GO" id="GO:0007059">
    <property type="term" value="P:chromosome segregation"/>
    <property type="evidence" value="ECO:0007669"/>
    <property type="project" value="UniProtKB-UniRule"/>
</dbReference>
<dbReference type="GO" id="GO:0006313">
    <property type="term" value="P:DNA transposition"/>
    <property type="evidence" value="ECO:0007669"/>
    <property type="project" value="UniProtKB-UniRule"/>
</dbReference>
<dbReference type="CDD" id="cd00798">
    <property type="entry name" value="INT_XerDC_C"/>
    <property type="match status" value="1"/>
</dbReference>
<dbReference type="FunFam" id="1.10.443.10:FF:000002">
    <property type="entry name" value="Tyrosine recombinase XerC"/>
    <property type="match status" value="1"/>
</dbReference>
<dbReference type="Gene3D" id="1.10.150.130">
    <property type="match status" value="1"/>
</dbReference>
<dbReference type="Gene3D" id="1.10.443.10">
    <property type="entry name" value="Intergrase catalytic core"/>
    <property type="match status" value="1"/>
</dbReference>
<dbReference type="HAMAP" id="MF_01808">
    <property type="entry name" value="Recomb_XerC_XerD"/>
    <property type="match status" value="1"/>
</dbReference>
<dbReference type="InterPro" id="IPR044068">
    <property type="entry name" value="CB"/>
</dbReference>
<dbReference type="InterPro" id="IPR011010">
    <property type="entry name" value="DNA_brk_join_enz"/>
</dbReference>
<dbReference type="InterPro" id="IPR013762">
    <property type="entry name" value="Integrase-like_cat_sf"/>
</dbReference>
<dbReference type="InterPro" id="IPR002104">
    <property type="entry name" value="Integrase_catalytic"/>
</dbReference>
<dbReference type="InterPro" id="IPR010998">
    <property type="entry name" value="Integrase_recombinase_N"/>
</dbReference>
<dbReference type="InterPro" id="IPR004107">
    <property type="entry name" value="Integrase_SAM-like_N"/>
</dbReference>
<dbReference type="InterPro" id="IPR011931">
    <property type="entry name" value="Recomb_XerC"/>
</dbReference>
<dbReference type="InterPro" id="IPR023009">
    <property type="entry name" value="Tyrosine_recombinase_XerC/XerD"/>
</dbReference>
<dbReference type="InterPro" id="IPR050090">
    <property type="entry name" value="Tyrosine_recombinase_XerCD"/>
</dbReference>
<dbReference type="NCBIfam" id="NF001399">
    <property type="entry name" value="PRK00283.1"/>
    <property type="match status" value="1"/>
</dbReference>
<dbReference type="NCBIfam" id="TIGR02224">
    <property type="entry name" value="recomb_XerC"/>
    <property type="match status" value="1"/>
</dbReference>
<dbReference type="PANTHER" id="PTHR30349">
    <property type="entry name" value="PHAGE INTEGRASE-RELATED"/>
    <property type="match status" value="1"/>
</dbReference>
<dbReference type="PANTHER" id="PTHR30349:SF81">
    <property type="entry name" value="TYROSINE RECOMBINASE XERC"/>
    <property type="match status" value="1"/>
</dbReference>
<dbReference type="Pfam" id="PF02899">
    <property type="entry name" value="Phage_int_SAM_1"/>
    <property type="match status" value="1"/>
</dbReference>
<dbReference type="Pfam" id="PF00589">
    <property type="entry name" value="Phage_integrase"/>
    <property type="match status" value="1"/>
</dbReference>
<dbReference type="SUPFAM" id="SSF56349">
    <property type="entry name" value="DNA breaking-rejoining enzymes"/>
    <property type="match status" value="1"/>
</dbReference>
<dbReference type="SUPFAM" id="SSF47823">
    <property type="entry name" value="lambda integrase-like, N-terminal domain"/>
    <property type="match status" value="1"/>
</dbReference>
<dbReference type="PROSITE" id="PS51900">
    <property type="entry name" value="CB"/>
    <property type="match status" value="1"/>
</dbReference>
<dbReference type="PROSITE" id="PS51898">
    <property type="entry name" value="TYR_RECOMBINASE"/>
    <property type="match status" value="1"/>
</dbReference>
<keyword id="KW-0131">Cell cycle</keyword>
<keyword id="KW-0132">Cell division</keyword>
<keyword id="KW-0159">Chromosome partition</keyword>
<keyword id="KW-0963">Cytoplasm</keyword>
<keyword id="KW-0229">DNA integration</keyword>
<keyword id="KW-0233">DNA recombination</keyword>
<keyword id="KW-0238">DNA-binding</keyword>
<keyword id="KW-1185">Reference proteome</keyword>
<feature type="chain" id="PRO_1000187587" description="Tyrosine recombinase XerC">
    <location>
        <begin position="1"/>
        <end position="298"/>
    </location>
</feature>
<feature type="domain" description="Core-binding (CB)" evidence="3">
    <location>
        <begin position="2"/>
        <end position="88"/>
    </location>
</feature>
<feature type="domain" description="Tyr recombinase" evidence="2">
    <location>
        <begin position="109"/>
        <end position="288"/>
    </location>
</feature>
<feature type="active site" evidence="1">
    <location>
        <position position="148"/>
    </location>
</feature>
<feature type="active site" evidence="1">
    <location>
        <position position="172"/>
    </location>
</feature>
<feature type="active site" evidence="1">
    <location>
        <position position="240"/>
    </location>
</feature>
<feature type="active site" evidence="1">
    <location>
        <position position="243"/>
    </location>
</feature>
<feature type="active site" evidence="1">
    <location>
        <position position="266"/>
    </location>
</feature>
<feature type="active site" description="O-(3'-phospho-DNA)-tyrosine intermediate" evidence="1">
    <location>
        <position position="275"/>
    </location>
</feature>
<name>XERC_ECO27</name>
<accession>B7UNC8</accession>
<protein>
    <recommendedName>
        <fullName evidence="1">Tyrosine recombinase XerC</fullName>
    </recommendedName>
</protein>
<reference key="1">
    <citation type="journal article" date="2009" name="J. Bacteriol.">
        <title>Complete genome sequence and comparative genome analysis of enteropathogenic Escherichia coli O127:H6 strain E2348/69.</title>
        <authorList>
            <person name="Iguchi A."/>
            <person name="Thomson N.R."/>
            <person name="Ogura Y."/>
            <person name="Saunders D."/>
            <person name="Ooka T."/>
            <person name="Henderson I.R."/>
            <person name="Harris D."/>
            <person name="Asadulghani M."/>
            <person name="Kurokawa K."/>
            <person name="Dean P."/>
            <person name="Kenny B."/>
            <person name="Quail M.A."/>
            <person name="Thurston S."/>
            <person name="Dougan G."/>
            <person name="Hayashi T."/>
            <person name="Parkhill J."/>
            <person name="Frankel G."/>
        </authorList>
    </citation>
    <scope>NUCLEOTIDE SEQUENCE [LARGE SCALE GENOMIC DNA]</scope>
    <source>
        <strain>E2348/69 / EPEC</strain>
    </source>
</reference>
<organism>
    <name type="scientific">Escherichia coli O127:H6 (strain E2348/69 / EPEC)</name>
    <dbReference type="NCBI Taxonomy" id="574521"/>
    <lineage>
        <taxon>Bacteria</taxon>
        <taxon>Pseudomonadati</taxon>
        <taxon>Pseudomonadota</taxon>
        <taxon>Gammaproteobacteria</taxon>
        <taxon>Enterobacterales</taxon>
        <taxon>Enterobacteriaceae</taxon>
        <taxon>Escherichia</taxon>
    </lineage>
</organism>
<proteinExistence type="inferred from homology"/>